<sequence length="551" mass="62227">MNRRRFIKGSMAMAAVCGSSGIASLFSQAAFAAESDIADGKIVRFDFAGLQSMAQALAKKPWGGAPGPLPDTLANLTPQAYNSIQYDAAHSLWNGVANRQLDIQFFHVGMGFRRRVRMFSVDTTTHLAREIHFRPELFKYNDAGVDTTQLEGQSDLGFAGFRVFKAPELARRDVVSFLGASYFRAVDDTYQYGLSARGLAIDTYTDGQEEFPDFTAFWFDTAKPGDTTFTVYALLDSASVTGAYKFVIHCEKSQVIMDVENHLYARKDIKQLGIAPMTSMFSCGNNERRVCDTIHPQIHDSDRLAMWRGNGEWICRPLNNPQKLQFNAYMDDNPKGFGLLQLDRDFSHYQDVMGWYNKRPSLWVEPRNKWGKGAVSLMEIPTTGETLDNVVCFWQPEKAIKAGDTLAFNYRLYWSAQPPVQSPLARVMATRTGMGGFPEGWAPGEHYPDKWARRFAIDFVGGDLKAAAPKGIEPVITLSSGEAKQIEILYVEPFDGYRIQFDWYPTSDSTAPVDMRMFLRCQGEAISETWLYQYFPPAPDKRRYVDDRIMR</sequence>
<reference key="1">
    <citation type="journal article" date="2001" name="Nature">
        <title>Complete genome sequence of Salmonella enterica serovar Typhimurium LT2.</title>
        <authorList>
            <person name="McClelland M."/>
            <person name="Sanderson K.E."/>
            <person name="Spieth J."/>
            <person name="Clifton S.W."/>
            <person name="Latreille P."/>
            <person name="Courtney L."/>
            <person name="Porwollik S."/>
            <person name="Ali J."/>
            <person name="Dante M."/>
            <person name="Du F."/>
            <person name="Hou S."/>
            <person name="Layman D."/>
            <person name="Leonard S."/>
            <person name="Nguyen C."/>
            <person name="Scott K."/>
            <person name="Holmes A."/>
            <person name="Grewal N."/>
            <person name="Mulvaney E."/>
            <person name="Ryan E."/>
            <person name="Sun H."/>
            <person name="Florea L."/>
            <person name="Miller W."/>
            <person name="Stoneking T."/>
            <person name="Nhan M."/>
            <person name="Waterston R."/>
            <person name="Wilson R.K."/>
        </authorList>
    </citation>
    <scope>NUCLEOTIDE SEQUENCE [LARGE SCALE GENOMIC DNA]</scope>
    <source>
        <strain>LT2 / SGSC1412 / ATCC 700720</strain>
    </source>
</reference>
<accession>Q8ZPB3</accession>
<protein>
    <recommendedName>
        <fullName>Glucans biosynthesis protein D</fullName>
    </recommendedName>
</protein>
<dbReference type="EMBL" id="AE006468">
    <property type="protein sequence ID" value="AAL20540.1"/>
    <property type="molecule type" value="Genomic_DNA"/>
</dbReference>
<dbReference type="RefSeq" id="WP_001081943.1">
    <property type="nucleotide sequence ID" value="NC_003197.2"/>
</dbReference>
<dbReference type="SMR" id="Q8ZPB3"/>
<dbReference type="STRING" id="99287.STM1622"/>
<dbReference type="PaxDb" id="99287-STM1622"/>
<dbReference type="KEGG" id="stm:STM1622"/>
<dbReference type="PATRIC" id="fig|99287.12.peg.1713"/>
<dbReference type="HOGENOM" id="CLU_023403_2_0_6"/>
<dbReference type="OMA" id="DVQFFHV"/>
<dbReference type="PhylomeDB" id="Q8ZPB3"/>
<dbReference type="BioCyc" id="SENT99287:STM1622-MONOMER"/>
<dbReference type="UniPathway" id="UPA00637"/>
<dbReference type="Proteomes" id="UP000001014">
    <property type="component" value="Chromosome"/>
</dbReference>
<dbReference type="GO" id="GO:0030288">
    <property type="term" value="C:outer membrane-bounded periplasmic space"/>
    <property type="evidence" value="ECO:0000318"/>
    <property type="project" value="GO_Central"/>
</dbReference>
<dbReference type="GO" id="GO:0030246">
    <property type="term" value="F:carbohydrate binding"/>
    <property type="evidence" value="ECO:0007669"/>
    <property type="project" value="InterPro"/>
</dbReference>
<dbReference type="GO" id="GO:0003824">
    <property type="term" value="F:catalytic activity"/>
    <property type="evidence" value="ECO:0007669"/>
    <property type="project" value="InterPro"/>
</dbReference>
<dbReference type="GO" id="GO:0051274">
    <property type="term" value="P:beta-glucan biosynthetic process"/>
    <property type="evidence" value="ECO:0000318"/>
    <property type="project" value="GO_Central"/>
</dbReference>
<dbReference type="FunFam" id="2.60.40.10:FF:000379">
    <property type="entry name" value="Glucans biosynthesis protein D"/>
    <property type="match status" value="1"/>
</dbReference>
<dbReference type="FunFam" id="2.70.98.10:FF:000004">
    <property type="entry name" value="Glucans biosynthesis protein D"/>
    <property type="match status" value="1"/>
</dbReference>
<dbReference type="Gene3D" id="2.70.98.10">
    <property type="match status" value="1"/>
</dbReference>
<dbReference type="Gene3D" id="2.60.40.10">
    <property type="entry name" value="Immunoglobulins"/>
    <property type="match status" value="1"/>
</dbReference>
<dbReference type="HAMAP" id="MF_01068">
    <property type="entry name" value="MdoD_OpgD"/>
    <property type="match status" value="1"/>
</dbReference>
<dbReference type="InterPro" id="IPR011013">
    <property type="entry name" value="Gal_mutarotase_sf_dom"/>
</dbReference>
<dbReference type="InterPro" id="IPR014718">
    <property type="entry name" value="GH-type_carb-bd"/>
</dbReference>
<dbReference type="InterPro" id="IPR023724">
    <property type="entry name" value="Glucan_biosyn_MdoD"/>
</dbReference>
<dbReference type="InterPro" id="IPR014438">
    <property type="entry name" value="Glucan_biosyn_MdoG/MdoD"/>
</dbReference>
<dbReference type="InterPro" id="IPR007444">
    <property type="entry name" value="Glucan_biosyn_MdoG_C"/>
</dbReference>
<dbReference type="InterPro" id="IPR013783">
    <property type="entry name" value="Ig-like_fold"/>
</dbReference>
<dbReference type="InterPro" id="IPR014756">
    <property type="entry name" value="Ig_E-set"/>
</dbReference>
<dbReference type="InterPro" id="IPR006311">
    <property type="entry name" value="TAT_signal"/>
</dbReference>
<dbReference type="InterPro" id="IPR019546">
    <property type="entry name" value="TAT_signal_bac_arc"/>
</dbReference>
<dbReference type="NCBIfam" id="TIGR01409">
    <property type="entry name" value="TAT_signal_seq"/>
    <property type="match status" value="1"/>
</dbReference>
<dbReference type="PANTHER" id="PTHR30504">
    <property type="entry name" value="GLUCANS BIOSYNTHESIS PROTEIN"/>
    <property type="match status" value="1"/>
</dbReference>
<dbReference type="PANTHER" id="PTHR30504:SF3">
    <property type="entry name" value="GLUCANS BIOSYNTHESIS PROTEIN D"/>
    <property type="match status" value="1"/>
</dbReference>
<dbReference type="Pfam" id="PF04349">
    <property type="entry name" value="MdoG"/>
    <property type="match status" value="1"/>
</dbReference>
<dbReference type="PIRSF" id="PIRSF006281">
    <property type="entry name" value="MdoG"/>
    <property type="match status" value="1"/>
</dbReference>
<dbReference type="SUPFAM" id="SSF81296">
    <property type="entry name" value="E set domains"/>
    <property type="match status" value="1"/>
</dbReference>
<dbReference type="SUPFAM" id="SSF74650">
    <property type="entry name" value="Galactose mutarotase-like"/>
    <property type="match status" value="1"/>
</dbReference>
<dbReference type="PROSITE" id="PS51318">
    <property type="entry name" value="TAT"/>
    <property type="match status" value="1"/>
</dbReference>
<name>OPGD_SALTY</name>
<proteinExistence type="inferred from homology"/>
<evidence type="ECO:0000250" key="1"/>
<evidence type="ECO:0000255" key="2"/>
<evidence type="ECO:0000305" key="3"/>
<gene>
    <name type="primary">mdoD</name>
    <name type="synonym">opgD</name>
    <name type="ordered locus">STM1622</name>
</gene>
<organism>
    <name type="scientific">Salmonella typhimurium (strain LT2 / SGSC1412 / ATCC 700720)</name>
    <dbReference type="NCBI Taxonomy" id="99287"/>
    <lineage>
        <taxon>Bacteria</taxon>
        <taxon>Pseudomonadati</taxon>
        <taxon>Pseudomonadota</taxon>
        <taxon>Gammaproteobacteria</taxon>
        <taxon>Enterobacterales</taxon>
        <taxon>Enterobacteriaceae</taxon>
        <taxon>Salmonella</taxon>
    </lineage>
</organism>
<comment type="function">
    <text evidence="1">Probably involved in the control of the structural glucose backbone of osmoregulated periplasmic glucans (OPGs).</text>
</comment>
<comment type="pathway">
    <text>Glycan metabolism; osmoregulated periplasmic glucan (OPG) biosynthesis.</text>
</comment>
<comment type="subcellular location">
    <subcellularLocation>
        <location evidence="1">Periplasm</location>
    </subcellularLocation>
</comment>
<comment type="PTM">
    <text>Predicted to be exported by the Tat system. The position of the signal peptide cleavage has not been experimentally proven.</text>
</comment>
<comment type="similarity">
    <text evidence="3">Belongs to the OpgD/OpgG family.</text>
</comment>
<feature type="signal peptide" description="Tat-type signal" evidence="2">
    <location>
        <begin position="1"/>
        <end position="32"/>
    </location>
</feature>
<feature type="chain" id="PRO_0000020213" description="Glucans biosynthesis protein D">
    <location>
        <begin position="33"/>
        <end position="551"/>
    </location>
</feature>
<keyword id="KW-0574">Periplasm</keyword>
<keyword id="KW-1185">Reference proteome</keyword>
<keyword id="KW-0732">Signal</keyword>